<feature type="chain" id="PRO_0000246810" description="7-cyano-7-deazaguanine synthase">
    <location>
        <begin position="1"/>
        <end position="244"/>
    </location>
</feature>
<feature type="binding site" evidence="1">
    <location>
        <begin position="17"/>
        <end position="27"/>
    </location>
    <ligand>
        <name>ATP</name>
        <dbReference type="ChEBI" id="CHEBI:30616"/>
    </ligand>
</feature>
<feature type="binding site" evidence="1">
    <location>
        <position position="205"/>
    </location>
    <ligand>
        <name>Zn(2+)</name>
        <dbReference type="ChEBI" id="CHEBI:29105"/>
    </ligand>
</feature>
<feature type="binding site" evidence="1">
    <location>
        <position position="220"/>
    </location>
    <ligand>
        <name>Zn(2+)</name>
        <dbReference type="ChEBI" id="CHEBI:29105"/>
    </ligand>
</feature>
<feature type="binding site" evidence="1">
    <location>
        <position position="223"/>
    </location>
    <ligand>
        <name>Zn(2+)</name>
        <dbReference type="ChEBI" id="CHEBI:29105"/>
    </ligand>
</feature>
<feature type="binding site" evidence="1">
    <location>
        <position position="226"/>
    </location>
    <ligand>
        <name>Zn(2+)</name>
        <dbReference type="ChEBI" id="CHEBI:29105"/>
    </ligand>
</feature>
<accession>Q7WCA8</accession>
<evidence type="ECO:0000255" key="1">
    <source>
        <dbReference type="HAMAP-Rule" id="MF_01633"/>
    </source>
</evidence>
<sequence length="244" mass="27400">MFRCLMQNHQRRALVLFSGGQDSTTCLAWALERYAHVETLGFDYGQRHRVELDARQVVLRELRANFPDWAQRLGDDHLLDLGILAQVGDTAMTSDREIEMQANGLPNTFVPGRNLLFLTLAAALGYRRQLDVLVGGMCETDFSGYPDCRDDTIKSQQVTLGLGLGTRVTIETPLMWLDKAQTWELADRLGGQALVDMVIEHSHTCYLGERGQRHDWGYGCGHCPACALRKNGWERWVAGAAYAD</sequence>
<name>QUEC_BORPA</name>
<proteinExistence type="inferred from homology"/>
<gene>
    <name evidence="1" type="primary">queC</name>
    <name type="ordered locus">BPP0419</name>
</gene>
<comment type="function">
    <text evidence="1">Catalyzes the ATP-dependent conversion of 7-carboxy-7-deazaguanine (CDG) to 7-cyano-7-deazaguanine (preQ(0)).</text>
</comment>
<comment type="catalytic activity">
    <reaction evidence="1">
        <text>7-carboxy-7-deazaguanine + NH4(+) + ATP = 7-cyano-7-deazaguanine + ADP + phosphate + H2O + H(+)</text>
        <dbReference type="Rhea" id="RHEA:27982"/>
        <dbReference type="ChEBI" id="CHEBI:15377"/>
        <dbReference type="ChEBI" id="CHEBI:15378"/>
        <dbReference type="ChEBI" id="CHEBI:28938"/>
        <dbReference type="ChEBI" id="CHEBI:30616"/>
        <dbReference type="ChEBI" id="CHEBI:43474"/>
        <dbReference type="ChEBI" id="CHEBI:45075"/>
        <dbReference type="ChEBI" id="CHEBI:61036"/>
        <dbReference type="ChEBI" id="CHEBI:456216"/>
        <dbReference type="EC" id="6.3.4.20"/>
    </reaction>
</comment>
<comment type="cofactor">
    <cofactor evidence="1">
        <name>Zn(2+)</name>
        <dbReference type="ChEBI" id="CHEBI:29105"/>
    </cofactor>
    <text evidence="1">Binds 1 zinc ion per subunit.</text>
</comment>
<comment type="pathway">
    <text evidence="1">Purine metabolism; 7-cyano-7-deazaguanine biosynthesis.</text>
</comment>
<comment type="similarity">
    <text evidence="1">Belongs to the QueC family.</text>
</comment>
<organism>
    <name type="scientific">Bordetella parapertussis (strain 12822 / ATCC BAA-587 / NCTC 13253)</name>
    <dbReference type="NCBI Taxonomy" id="257311"/>
    <lineage>
        <taxon>Bacteria</taxon>
        <taxon>Pseudomonadati</taxon>
        <taxon>Pseudomonadota</taxon>
        <taxon>Betaproteobacteria</taxon>
        <taxon>Burkholderiales</taxon>
        <taxon>Alcaligenaceae</taxon>
        <taxon>Bordetella</taxon>
    </lineage>
</organism>
<reference key="1">
    <citation type="journal article" date="2003" name="Nat. Genet.">
        <title>Comparative analysis of the genome sequences of Bordetella pertussis, Bordetella parapertussis and Bordetella bronchiseptica.</title>
        <authorList>
            <person name="Parkhill J."/>
            <person name="Sebaihia M."/>
            <person name="Preston A."/>
            <person name="Murphy L.D."/>
            <person name="Thomson N.R."/>
            <person name="Harris D.E."/>
            <person name="Holden M.T.G."/>
            <person name="Churcher C.M."/>
            <person name="Bentley S.D."/>
            <person name="Mungall K.L."/>
            <person name="Cerdeno-Tarraga A.-M."/>
            <person name="Temple L."/>
            <person name="James K.D."/>
            <person name="Harris B."/>
            <person name="Quail M.A."/>
            <person name="Achtman M."/>
            <person name="Atkin R."/>
            <person name="Baker S."/>
            <person name="Basham D."/>
            <person name="Bason N."/>
            <person name="Cherevach I."/>
            <person name="Chillingworth T."/>
            <person name="Collins M."/>
            <person name="Cronin A."/>
            <person name="Davis P."/>
            <person name="Doggett J."/>
            <person name="Feltwell T."/>
            <person name="Goble A."/>
            <person name="Hamlin N."/>
            <person name="Hauser H."/>
            <person name="Holroyd S."/>
            <person name="Jagels K."/>
            <person name="Leather S."/>
            <person name="Moule S."/>
            <person name="Norberczak H."/>
            <person name="O'Neil S."/>
            <person name="Ormond D."/>
            <person name="Price C."/>
            <person name="Rabbinowitsch E."/>
            <person name="Rutter S."/>
            <person name="Sanders M."/>
            <person name="Saunders D."/>
            <person name="Seeger K."/>
            <person name="Sharp S."/>
            <person name="Simmonds M."/>
            <person name="Skelton J."/>
            <person name="Squares R."/>
            <person name="Squares S."/>
            <person name="Stevens K."/>
            <person name="Unwin L."/>
            <person name="Whitehead S."/>
            <person name="Barrell B.G."/>
            <person name="Maskell D.J."/>
        </authorList>
    </citation>
    <scope>NUCLEOTIDE SEQUENCE [LARGE SCALE GENOMIC DNA]</scope>
    <source>
        <strain>12822 / ATCC BAA-587 / NCTC 13253</strain>
    </source>
</reference>
<protein>
    <recommendedName>
        <fullName evidence="1">7-cyano-7-deazaguanine synthase</fullName>
        <ecNumber evidence="1">6.3.4.20</ecNumber>
    </recommendedName>
    <alternativeName>
        <fullName evidence="1">7-cyano-7-carbaguanine synthase</fullName>
    </alternativeName>
    <alternativeName>
        <fullName evidence="1">PreQ(0) synthase</fullName>
    </alternativeName>
    <alternativeName>
        <fullName evidence="1">Queuosine biosynthesis protein QueC</fullName>
    </alternativeName>
</protein>
<dbReference type="EC" id="6.3.4.20" evidence="1"/>
<dbReference type="EMBL" id="BX640424">
    <property type="protein sequence ID" value="CAE36003.1"/>
    <property type="molecule type" value="Genomic_DNA"/>
</dbReference>
<dbReference type="SMR" id="Q7WCA8"/>
<dbReference type="KEGG" id="bpa:BPP0419"/>
<dbReference type="HOGENOM" id="CLU_081854_0_0_4"/>
<dbReference type="UniPathway" id="UPA00391"/>
<dbReference type="Proteomes" id="UP000001421">
    <property type="component" value="Chromosome"/>
</dbReference>
<dbReference type="GO" id="GO:0005524">
    <property type="term" value="F:ATP binding"/>
    <property type="evidence" value="ECO:0007669"/>
    <property type="project" value="UniProtKB-UniRule"/>
</dbReference>
<dbReference type="GO" id="GO:0016879">
    <property type="term" value="F:ligase activity, forming carbon-nitrogen bonds"/>
    <property type="evidence" value="ECO:0007669"/>
    <property type="project" value="UniProtKB-UniRule"/>
</dbReference>
<dbReference type="GO" id="GO:0008270">
    <property type="term" value="F:zinc ion binding"/>
    <property type="evidence" value="ECO:0007669"/>
    <property type="project" value="UniProtKB-UniRule"/>
</dbReference>
<dbReference type="GO" id="GO:0008616">
    <property type="term" value="P:queuosine biosynthetic process"/>
    <property type="evidence" value="ECO:0007669"/>
    <property type="project" value="UniProtKB-UniRule"/>
</dbReference>
<dbReference type="CDD" id="cd01995">
    <property type="entry name" value="QueC-like"/>
    <property type="match status" value="1"/>
</dbReference>
<dbReference type="Gene3D" id="3.40.50.620">
    <property type="entry name" value="HUPs"/>
    <property type="match status" value="1"/>
</dbReference>
<dbReference type="HAMAP" id="MF_01633">
    <property type="entry name" value="QueC"/>
    <property type="match status" value="1"/>
</dbReference>
<dbReference type="InterPro" id="IPR018317">
    <property type="entry name" value="QueC"/>
</dbReference>
<dbReference type="InterPro" id="IPR014729">
    <property type="entry name" value="Rossmann-like_a/b/a_fold"/>
</dbReference>
<dbReference type="NCBIfam" id="TIGR00364">
    <property type="entry name" value="7-cyano-7-deazaguanine synthase QueC"/>
    <property type="match status" value="1"/>
</dbReference>
<dbReference type="PANTHER" id="PTHR42914">
    <property type="entry name" value="7-CYANO-7-DEAZAGUANINE SYNTHASE"/>
    <property type="match status" value="1"/>
</dbReference>
<dbReference type="PANTHER" id="PTHR42914:SF1">
    <property type="entry name" value="7-CYANO-7-DEAZAGUANINE SYNTHASE"/>
    <property type="match status" value="1"/>
</dbReference>
<dbReference type="Pfam" id="PF06508">
    <property type="entry name" value="QueC"/>
    <property type="match status" value="1"/>
</dbReference>
<dbReference type="PIRSF" id="PIRSF006293">
    <property type="entry name" value="ExsB"/>
    <property type="match status" value="1"/>
</dbReference>
<dbReference type="SUPFAM" id="SSF52402">
    <property type="entry name" value="Adenine nucleotide alpha hydrolases-like"/>
    <property type="match status" value="1"/>
</dbReference>
<keyword id="KW-0067">ATP-binding</keyword>
<keyword id="KW-0436">Ligase</keyword>
<keyword id="KW-0479">Metal-binding</keyword>
<keyword id="KW-0547">Nucleotide-binding</keyword>
<keyword id="KW-0671">Queuosine biosynthesis</keyword>
<keyword id="KW-0862">Zinc</keyword>